<evidence type="ECO:0000250" key="1">
    <source>
        <dbReference type="UniProtKB" id="Q96PY5"/>
    </source>
</evidence>
<evidence type="ECO:0000250" key="2">
    <source>
        <dbReference type="UniProtKB" id="Q9VUC6"/>
    </source>
</evidence>
<evidence type="ECO:0000255" key="3"/>
<evidence type="ECO:0000255" key="4">
    <source>
        <dbReference type="PROSITE-ProRule" id="PRU00579"/>
    </source>
</evidence>
<evidence type="ECO:0000255" key="5">
    <source>
        <dbReference type="PROSITE-ProRule" id="PRU00774"/>
    </source>
</evidence>
<evidence type="ECO:0000256" key="6">
    <source>
        <dbReference type="SAM" id="MobiDB-lite"/>
    </source>
</evidence>
<evidence type="ECO:0000269" key="7">
    <source>
    </source>
</evidence>
<evidence type="ECO:0000305" key="8"/>
<gene>
    <name evidence="1" type="primary">FMNL2</name>
</gene>
<name>FMNL2_BOVIN</name>
<accession>A0A3Q1LSX9</accession>
<reference key="1">
    <citation type="submission" date="2018-03" db="EMBL/GenBank/DDBJ databases">
        <title>ARS-UCD1.2.</title>
        <authorList>
            <person name="Rosen B.D."/>
            <person name="Bickhart D.M."/>
            <person name="Koren S."/>
            <person name="Schnabel R.D."/>
            <person name="Hall R."/>
            <person name="Zimin A."/>
            <person name="Dreischer C."/>
            <person name="Schultheiss S."/>
            <person name="Schroeder S.G."/>
            <person name="Elsik C.G."/>
            <person name="Couldrey C."/>
            <person name="Liu G.E."/>
            <person name="Van Tassell C.P."/>
            <person name="Phillippy A.M."/>
            <person name="Smith T.P.L."/>
            <person name="Medrano J.F."/>
        </authorList>
    </citation>
    <scope>NUCLEOTIDE SEQUENCE [LARGE SCALE GENOMIC DNA]</scope>
    <source>
        <strain>Hereford</strain>
    </source>
</reference>
<reference key="2">
    <citation type="journal article" date="2020" name="J. Cell. Physiol.">
        <title>TCP11L2 promotes bovine skeletal muscle-derived satellite cell migration and differentiation via FMNL2.</title>
        <authorList>
            <person name="Li S."/>
            <person name="Wang Z."/>
            <person name="Tong H."/>
            <person name="Li S."/>
            <person name="Yan Y."/>
        </authorList>
    </citation>
    <scope>INTERACTION WITH TCP11L2</scope>
    <scope>SUBCELLULAR LOCATION</scope>
</reference>
<keyword id="KW-0009">Actin-binding</keyword>
<keyword id="KW-0175">Coiled coil</keyword>
<keyword id="KW-0963">Cytoplasm</keyword>
<keyword id="KW-1185">Reference proteome</keyword>
<protein>
    <recommendedName>
        <fullName evidence="1">Formin-like protein 2</fullName>
    </recommendedName>
</protein>
<proteinExistence type="evidence at protein level"/>
<organism>
    <name type="scientific">Bos taurus</name>
    <name type="common">Bovine</name>
    <dbReference type="NCBI Taxonomy" id="9913"/>
    <lineage>
        <taxon>Eukaryota</taxon>
        <taxon>Metazoa</taxon>
        <taxon>Chordata</taxon>
        <taxon>Craniata</taxon>
        <taxon>Vertebrata</taxon>
        <taxon>Euteleostomi</taxon>
        <taxon>Mammalia</taxon>
        <taxon>Eutheria</taxon>
        <taxon>Laurasiatheria</taxon>
        <taxon>Artiodactyla</taxon>
        <taxon>Ruminantia</taxon>
        <taxon>Pecora</taxon>
        <taxon>Bovidae</taxon>
        <taxon>Bovinae</taxon>
        <taxon>Bos</taxon>
    </lineage>
</organism>
<feature type="chain" id="PRO_0000458825" description="Formin-like protein 2">
    <location>
        <begin position="1"/>
        <end position="1095"/>
    </location>
</feature>
<feature type="domain" description="GBD/FH3" evidence="4">
    <location>
        <begin position="23"/>
        <end position="469"/>
    </location>
</feature>
<feature type="domain" description="FH2" evidence="5">
    <location>
        <begin position="617"/>
        <end position="1008"/>
    </location>
</feature>
<feature type="region of interest" description="Disordered" evidence="6">
    <location>
        <begin position="521"/>
        <end position="602"/>
    </location>
</feature>
<feature type="coiled-coil region" evidence="3">
    <location>
        <begin position="381"/>
        <end position="478"/>
    </location>
</feature>
<feature type="compositionally biased region" description="Pro residues" evidence="6">
    <location>
        <begin position="524"/>
        <end position="534"/>
    </location>
</feature>
<feature type="compositionally biased region" description="Pro residues" evidence="6">
    <location>
        <begin position="548"/>
        <end position="576"/>
    </location>
</feature>
<feature type="compositionally biased region" description="Pro residues" evidence="6">
    <location>
        <begin position="583"/>
        <end position="599"/>
    </location>
</feature>
<comment type="function">
    <text evidence="1">Plays a role in the regulation of cell morphology and cytoskeletal organization. Required in the cortical actin filament dynamics.</text>
</comment>
<comment type="subunit">
    <text evidence="7">Interacts with TCP11L2; this interaction promotes muscle-derived satellite cell (MDSC) migration and differentiation.</text>
</comment>
<comment type="subcellular location">
    <subcellularLocation>
        <location evidence="7">Cytoplasm</location>
    </subcellularLocation>
</comment>
<comment type="domain">
    <text evidence="2">The DAD domain regulates activation via by an autoinhibitory interaction with the GBD/FH3 domain. This autoinhibition is released upon competitive binding of an activated GTPase. The release of DAD allows the FH2 domain to then nucleate and elongate nonbranched actin filaments (By similarity).</text>
</comment>
<comment type="similarity">
    <text evidence="8">Belongs to the formin homology family.</text>
</comment>
<sequence>MGNAGSMDSQQTDFRAHNVPLKLPMPEPGELEERFAIVLNAMNLPPDKARLLRQYDNEKKWELICDQERFQVKNPPHTYIQKLKGYLDPAVTRKKFRRRVQESTQVLRELEISLRTNHIGWVREFLNEENKGLDVLVEYLSFAQYAVTFDFESVESTVESSVDKSKPWSRSIEDLHRGSNLPSPVGNSVSRSGRHSALRYNTLPSRRTLKNSRLVSKKDDVHVCIMCLRAIMNYQYGFNMVMSHPHAVNEIALSLNNKNPRTKALVLELLAAVCLVRGGHEIILSAFDNFKEVCGEKQRFEKLMEHFRNEDNNIDFMVASMQFINIVVHSVEDMNFRVHLQYEFTKLGLDEYLDKLKHTESDKLQVQIQAYLDNVFDVGALLEDAETKNAALERVEELEENISHLSEKLQDTENEAMSKIVELEKQLMQRNKELDVVREIYKDANTQVHTLRKMVKEKEEAIQRQSTLEKKIHELEKQGTIKIQKKGDGDIAILPVVASGTLPTGSEVAVGNFVGPVMGAPSSGPLPPPPPPLPLSSDAPEAVQNGPATPPVPPPPPPPPPPPPPPPPPPPPPLPGPAAETLPAPPLPPPPPPSAPPLPGTSSPTVVFNSGLAAVKIKKPIKTKFRMPVFNWVALKPNQINGTVFNEIDDERILEDLNVDEFEEIFKTKAQGPAIDLSSSKQKITQKGSNKVTLLEANRAKNLAITLRKAGKTAEEICKAIHVFDLKTLPVDFVECLMRFLPTENEVKVLRLYERERKPLENLSDEDRFMMQFSKIERLMQKMTIMAFIGNFTESIQMLTPQLHSIIAASVSIKSSQKLKKILEIILALGNYMNSSKRGAVYGFKLQSLDLLLDTKSTDRKQTLLHYISNVVKEKYQQVSLFYNELHYVEKAAAVSLENVLLDVKELQRGMDLTKREYTMHDHNTLLKEFIFNNEGKLKKLQDDAKIAQDAFDDVVKYFGENPKTTPPSVFFPVFVRFVKAYKQAEEENELRKKQEQALMEKLLEQEALLEQQDPKSPSHKSKRQQQELIAELRRRQVKDNRHVYEGKDGAIEDIITALKKNNITKFPNVHSRVRISSSTPVVEDTQSWQASLFT</sequence>
<dbReference type="EMBL" id="NKLS02000002">
    <property type="status" value="NOT_ANNOTATED_CDS"/>
    <property type="molecule type" value="Genomic_RNA"/>
</dbReference>
<dbReference type="SMR" id="A0A3Q1LSX9"/>
<dbReference type="FunCoup" id="A0A3Q1LSX9">
    <property type="interactions" value="1245"/>
</dbReference>
<dbReference type="STRING" id="9913.ENSBTAP00000063529"/>
<dbReference type="VEuPathDB" id="HostDB:ENSBTAG00000026851"/>
<dbReference type="InParanoid" id="A0A3Q1LSX9"/>
<dbReference type="OMA" id="MMPGFSP"/>
<dbReference type="OrthoDB" id="1104827at2759"/>
<dbReference type="Reactome" id="R-BTA-5663220">
    <property type="pathway name" value="RHO GTPases Activate Formins"/>
</dbReference>
<dbReference type="Reactome" id="R-BTA-9013106">
    <property type="pathway name" value="RHOC GTPase cycle"/>
</dbReference>
<dbReference type="Proteomes" id="UP000009136">
    <property type="component" value="Chromosome 2"/>
</dbReference>
<dbReference type="Bgee" id="ENSBTAG00000026851">
    <property type="expression patterns" value="Expressed in hypothalamus and 106 other cell types or tissues"/>
</dbReference>
<dbReference type="GO" id="GO:0005829">
    <property type="term" value="C:cytosol"/>
    <property type="evidence" value="ECO:0000318"/>
    <property type="project" value="GO_Central"/>
</dbReference>
<dbReference type="GO" id="GO:0051015">
    <property type="term" value="F:actin filament binding"/>
    <property type="evidence" value="ECO:0000318"/>
    <property type="project" value="GO_Central"/>
</dbReference>
<dbReference type="GO" id="GO:0031267">
    <property type="term" value="F:small GTPase binding"/>
    <property type="evidence" value="ECO:0007669"/>
    <property type="project" value="InterPro"/>
</dbReference>
<dbReference type="GO" id="GO:0016477">
    <property type="term" value="P:cell migration"/>
    <property type="evidence" value="ECO:0000318"/>
    <property type="project" value="GO_Central"/>
</dbReference>
<dbReference type="GO" id="GO:0030866">
    <property type="term" value="P:cortical actin cytoskeleton organization"/>
    <property type="evidence" value="ECO:0000318"/>
    <property type="project" value="GO_Central"/>
</dbReference>
<dbReference type="GO" id="GO:0008360">
    <property type="term" value="P:regulation of cell shape"/>
    <property type="evidence" value="ECO:0000318"/>
    <property type="project" value="GO_Central"/>
</dbReference>
<dbReference type="FunFam" id="1.20.58.2220:FF:000001">
    <property type="entry name" value="Formin-like 1, isoform CRA_c"/>
    <property type="match status" value="1"/>
</dbReference>
<dbReference type="FunFam" id="1.25.10.10:FF:000036">
    <property type="entry name" value="Formin-like protein 3 isoform 1"/>
    <property type="match status" value="1"/>
</dbReference>
<dbReference type="FunFam" id="1.25.10.10:FF:000045">
    <property type="entry name" value="Formin-like protein 3 isoform 1"/>
    <property type="match status" value="1"/>
</dbReference>
<dbReference type="Gene3D" id="1.20.58.2220">
    <property type="entry name" value="Formin, FH2 domain"/>
    <property type="match status" value="1"/>
</dbReference>
<dbReference type="Gene3D" id="1.25.10.10">
    <property type="entry name" value="Leucine-rich Repeat Variant"/>
    <property type="match status" value="2"/>
</dbReference>
<dbReference type="InterPro" id="IPR011989">
    <property type="entry name" value="ARM-like"/>
</dbReference>
<dbReference type="InterPro" id="IPR016024">
    <property type="entry name" value="ARM-type_fold"/>
</dbReference>
<dbReference type="InterPro" id="IPR015425">
    <property type="entry name" value="FH2_Formin"/>
</dbReference>
<dbReference type="InterPro" id="IPR042201">
    <property type="entry name" value="FH2_Formin_sf"/>
</dbReference>
<dbReference type="InterPro" id="IPR010472">
    <property type="entry name" value="FH3_dom"/>
</dbReference>
<dbReference type="InterPro" id="IPR043592">
    <property type="entry name" value="FMNL_animal"/>
</dbReference>
<dbReference type="InterPro" id="IPR014768">
    <property type="entry name" value="GBD/FH3_dom"/>
</dbReference>
<dbReference type="InterPro" id="IPR010473">
    <property type="entry name" value="GTPase-bd"/>
</dbReference>
<dbReference type="PANTHER" id="PTHR45857">
    <property type="entry name" value="FORMIN-LIKE PROTEIN"/>
    <property type="match status" value="1"/>
</dbReference>
<dbReference type="PANTHER" id="PTHR45857:SF5">
    <property type="entry name" value="FORMIN-LIKE PROTEIN 2"/>
    <property type="match status" value="1"/>
</dbReference>
<dbReference type="Pfam" id="PF06367">
    <property type="entry name" value="Drf_FH3"/>
    <property type="match status" value="1"/>
</dbReference>
<dbReference type="Pfam" id="PF06371">
    <property type="entry name" value="Drf_GBD"/>
    <property type="match status" value="2"/>
</dbReference>
<dbReference type="Pfam" id="PF02181">
    <property type="entry name" value="FH2"/>
    <property type="match status" value="1"/>
</dbReference>
<dbReference type="PRINTS" id="PR01217">
    <property type="entry name" value="PRICHEXTENSN"/>
</dbReference>
<dbReference type="SMART" id="SM01139">
    <property type="entry name" value="Drf_FH3"/>
    <property type="match status" value="1"/>
</dbReference>
<dbReference type="SMART" id="SM01140">
    <property type="entry name" value="Drf_GBD"/>
    <property type="match status" value="1"/>
</dbReference>
<dbReference type="SMART" id="SM00498">
    <property type="entry name" value="FH2"/>
    <property type="match status" value="1"/>
</dbReference>
<dbReference type="SUPFAM" id="SSF48371">
    <property type="entry name" value="ARM repeat"/>
    <property type="match status" value="1"/>
</dbReference>
<dbReference type="SUPFAM" id="SSF101447">
    <property type="entry name" value="Formin homology 2 domain (FH2 domain)"/>
    <property type="match status" value="1"/>
</dbReference>
<dbReference type="PROSITE" id="PS51444">
    <property type="entry name" value="FH2"/>
    <property type="match status" value="1"/>
</dbReference>
<dbReference type="PROSITE" id="PS51232">
    <property type="entry name" value="GBD_FH3"/>
    <property type="match status" value="1"/>
</dbReference>